<name>RL35_CHRSD</name>
<protein>
    <recommendedName>
        <fullName evidence="1">Large ribosomal subunit protein bL35</fullName>
    </recommendedName>
    <alternativeName>
        <fullName evidence="3">50S ribosomal protein L35</fullName>
    </alternativeName>
</protein>
<gene>
    <name evidence="1" type="primary">rpmI</name>
    <name type="ordered locus">Csal_1801</name>
</gene>
<feature type="chain" id="PRO_0000258659" description="Large ribosomal subunit protein bL35">
    <location>
        <begin position="1"/>
        <end position="64"/>
    </location>
</feature>
<feature type="region of interest" description="Disordered" evidence="2">
    <location>
        <begin position="1"/>
        <end position="54"/>
    </location>
</feature>
<feature type="compositionally biased region" description="Basic residues" evidence="2">
    <location>
        <begin position="12"/>
        <end position="44"/>
    </location>
</feature>
<evidence type="ECO:0000255" key="1">
    <source>
        <dbReference type="HAMAP-Rule" id="MF_00514"/>
    </source>
</evidence>
<evidence type="ECO:0000256" key="2">
    <source>
        <dbReference type="SAM" id="MobiDB-lite"/>
    </source>
</evidence>
<evidence type="ECO:0000305" key="3"/>
<reference key="1">
    <citation type="journal article" date="2011" name="Stand. Genomic Sci.">
        <title>Complete genome sequence of the halophilic and highly halotolerant Chromohalobacter salexigens type strain (1H11(T)).</title>
        <authorList>
            <person name="Copeland A."/>
            <person name="O'Connor K."/>
            <person name="Lucas S."/>
            <person name="Lapidus A."/>
            <person name="Berry K.W."/>
            <person name="Detter J.C."/>
            <person name="Del Rio T.G."/>
            <person name="Hammon N."/>
            <person name="Dalin E."/>
            <person name="Tice H."/>
            <person name="Pitluck S."/>
            <person name="Bruce D."/>
            <person name="Goodwin L."/>
            <person name="Han C."/>
            <person name="Tapia R."/>
            <person name="Saunders E."/>
            <person name="Schmutz J."/>
            <person name="Brettin T."/>
            <person name="Larimer F."/>
            <person name="Land M."/>
            <person name="Hauser L."/>
            <person name="Vargas C."/>
            <person name="Nieto J.J."/>
            <person name="Kyrpides N.C."/>
            <person name="Ivanova N."/>
            <person name="Goker M."/>
            <person name="Klenk H.P."/>
            <person name="Csonka L.N."/>
            <person name="Woyke T."/>
        </authorList>
    </citation>
    <scope>NUCLEOTIDE SEQUENCE [LARGE SCALE GENOMIC DNA]</scope>
    <source>
        <strain>ATCC BAA-138 / DSM 3043 / CIP 106854 / NCIMB 13768 / 1H11</strain>
    </source>
</reference>
<comment type="similarity">
    <text evidence="1">Belongs to the bacterial ribosomal protein bL35 family.</text>
</comment>
<keyword id="KW-1185">Reference proteome</keyword>
<keyword id="KW-0687">Ribonucleoprotein</keyword>
<keyword id="KW-0689">Ribosomal protein</keyword>
<proteinExistence type="inferred from homology"/>
<organism>
    <name type="scientific">Chromohalobacter salexigens (strain ATCC BAA-138 / DSM 3043 / CIP 106854 / NCIMB 13768 / 1H11)</name>
    <dbReference type="NCBI Taxonomy" id="290398"/>
    <lineage>
        <taxon>Bacteria</taxon>
        <taxon>Pseudomonadati</taxon>
        <taxon>Pseudomonadota</taxon>
        <taxon>Gammaproteobacteria</taxon>
        <taxon>Oceanospirillales</taxon>
        <taxon>Halomonadaceae</taxon>
        <taxon>Chromohalobacter</taxon>
    </lineage>
</organism>
<accession>Q1QWK5</accession>
<sequence length="64" mass="7511">MPKIKSNSGAAKRFKKTAHGFKHKQSFRSHILTKKSTKRKRQLRGMKQIHDADKQLIQRMLPNL</sequence>
<dbReference type="EMBL" id="CP000285">
    <property type="protein sequence ID" value="ABE59153.1"/>
    <property type="molecule type" value="Genomic_DNA"/>
</dbReference>
<dbReference type="RefSeq" id="WP_011507099.1">
    <property type="nucleotide sequence ID" value="NC_007963.1"/>
</dbReference>
<dbReference type="SMR" id="Q1QWK5"/>
<dbReference type="STRING" id="290398.Csal_1801"/>
<dbReference type="GeneID" id="95334514"/>
<dbReference type="KEGG" id="csa:Csal_1801"/>
<dbReference type="eggNOG" id="COG0291">
    <property type="taxonomic scope" value="Bacteria"/>
</dbReference>
<dbReference type="HOGENOM" id="CLU_169643_1_1_6"/>
<dbReference type="OrthoDB" id="47476at2"/>
<dbReference type="Proteomes" id="UP000000239">
    <property type="component" value="Chromosome"/>
</dbReference>
<dbReference type="GO" id="GO:0022625">
    <property type="term" value="C:cytosolic large ribosomal subunit"/>
    <property type="evidence" value="ECO:0007669"/>
    <property type="project" value="TreeGrafter"/>
</dbReference>
<dbReference type="GO" id="GO:0003735">
    <property type="term" value="F:structural constituent of ribosome"/>
    <property type="evidence" value="ECO:0007669"/>
    <property type="project" value="InterPro"/>
</dbReference>
<dbReference type="GO" id="GO:0006412">
    <property type="term" value="P:translation"/>
    <property type="evidence" value="ECO:0007669"/>
    <property type="project" value="UniProtKB-UniRule"/>
</dbReference>
<dbReference type="FunFam" id="4.10.410.60:FF:000001">
    <property type="entry name" value="50S ribosomal protein L35"/>
    <property type="match status" value="1"/>
</dbReference>
<dbReference type="Gene3D" id="4.10.410.60">
    <property type="match status" value="1"/>
</dbReference>
<dbReference type="HAMAP" id="MF_00514">
    <property type="entry name" value="Ribosomal_bL35"/>
    <property type="match status" value="1"/>
</dbReference>
<dbReference type="InterPro" id="IPR001706">
    <property type="entry name" value="Ribosomal_bL35"/>
</dbReference>
<dbReference type="InterPro" id="IPR021137">
    <property type="entry name" value="Ribosomal_bL35-like"/>
</dbReference>
<dbReference type="InterPro" id="IPR018265">
    <property type="entry name" value="Ribosomal_bL35_CS"/>
</dbReference>
<dbReference type="InterPro" id="IPR037229">
    <property type="entry name" value="Ribosomal_bL35_sf"/>
</dbReference>
<dbReference type="NCBIfam" id="TIGR00001">
    <property type="entry name" value="rpmI_bact"/>
    <property type="match status" value="1"/>
</dbReference>
<dbReference type="PANTHER" id="PTHR33343">
    <property type="entry name" value="54S RIBOSOMAL PROTEIN BL35M"/>
    <property type="match status" value="1"/>
</dbReference>
<dbReference type="PANTHER" id="PTHR33343:SF1">
    <property type="entry name" value="LARGE RIBOSOMAL SUBUNIT PROTEIN BL35M"/>
    <property type="match status" value="1"/>
</dbReference>
<dbReference type="Pfam" id="PF01632">
    <property type="entry name" value="Ribosomal_L35p"/>
    <property type="match status" value="1"/>
</dbReference>
<dbReference type="PRINTS" id="PR00064">
    <property type="entry name" value="RIBOSOMALL35"/>
</dbReference>
<dbReference type="SUPFAM" id="SSF143034">
    <property type="entry name" value="L35p-like"/>
    <property type="match status" value="1"/>
</dbReference>
<dbReference type="PROSITE" id="PS00936">
    <property type="entry name" value="RIBOSOMAL_L35"/>
    <property type="match status" value="1"/>
</dbReference>